<protein>
    <recommendedName>
        <fullName evidence="4">Complement inhibitor RaCI4</fullName>
    </recommendedName>
</protein>
<accession>E2J6T4</accession>
<comment type="function">
    <text evidence="1 3">Complement inhibitor (PubMed:27018802). Prevents complement-mediated C5 activation by binding to C5 (PubMed:27018802). Binds C5 at a different binding site than the other tick complement inhibitors OmCI and CirpT1, and the drug eculizumab (By similarity). Inhibits complement in human and guinea pig but not in other species tested (rabbit, rat, mouse, and pig) (PubMed:27018802).</text>
</comment>
<comment type="subcellular location">
    <subcellularLocation>
        <location evidence="6">Secreted</location>
    </subcellularLocation>
</comment>
<comment type="tissue specificity">
    <text evidence="6">Expressed in salivary glands.</text>
</comment>
<comment type="similarity">
    <text evidence="5">Belongs to the RaCI family.</text>
</comment>
<organism>
    <name type="scientific">Hyalomma rufipes</name>
    <name type="common">Tick</name>
    <name type="synonym">Hyalomma marginatum rufipes</name>
    <dbReference type="NCBI Taxonomy" id="72862"/>
    <lineage>
        <taxon>Eukaryota</taxon>
        <taxon>Metazoa</taxon>
        <taxon>Ecdysozoa</taxon>
        <taxon>Arthropoda</taxon>
        <taxon>Chelicerata</taxon>
        <taxon>Arachnida</taxon>
        <taxon>Acari</taxon>
        <taxon>Parasitiformes</taxon>
        <taxon>Ixodida</taxon>
        <taxon>Ixodoidea</taxon>
        <taxon>Ixodidae</taxon>
        <taxon>Hyalomminae</taxon>
        <taxon>Hyalomma</taxon>
    </lineage>
</organism>
<keyword id="KW-1216">Complement system impairing toxin</keyword>
<keyword id="KW-1015">Disulfide bond</keyword>
<keyword id="KW-0964">Secreted</keyword>
<keyword id="KW-0732">Signal</keyword>
<keyword id="KW-0800">Toxin</keyword>
<evidence type="ECO:0000250" key="1">
    <source>
        <dbReference type="UniProtKB" id="A0A146B485"/>
    </source>
</evidence>
<evidence type="ECO:0000255" key="2"/>
<evidence type="ECO:0000269" key="3">
    <source>
    </source>
</evidence>
<evidence type="ECO:0000303" key="4">
    <source>
    </source>
</evidence>
<evidence type="ECO:0000305" key="5"/>
<evidence type="ECO:0000305" key="6">
    <source>
    </source>
</evidence>
<evidence type="ECO:0000312" key="7">
    <source>
        <dbReference type="EMBL" id="ADN23522.1"/>
    </source>
</evidence>
<evidence type="ECO:0000312" key="8">
    <source>
        <dbReference type="EMBL" id="DAA64996.1"/>
    </source>
</evidence>
<name>C5I4_HYARU</name>
<sequence>MSAFNIFALVVVVCALMINECCTSQEPTTPLKAASQCSNVKCRRRFDHLGNSVTEGCPSGCLCVYQATGYNQEANGTCYELMKTSTTTTTEGTPAQ</sequence>
<feature type="signal peptide" evidence="2">
    <location>
        <begin position="1"/>
        <end position="24"/>
    </location>
</feature>
<feature type="chain" id="PRO_5010961975" description="Complement inhibitor RaCI4">
    <location>
        <begin position="25"/>
        <end position="96"/>
    </location>
</feature>
<feature type="disulfide bond" evidence="1">
    <location>
        <begin position="37"/>
        <end position="61"/>
    </location>
</feature>
<feature type="disulfide bond" evidence="1">
    <location>
        <begin position="42"/>
        <end position="63"/>
    </location>
</feature>
<feature type="disulfide bond" evidence="1">
    <location>
        <begin position="57"/>
        <end position="78"/>
    </location>
</feature>
<reference evidence="7" key="1">
    <citation type="journal article" date="2011" name="J. Proteomics">
        <title>An insight into the sialotranscriptome and proteome of the coarse bontlegged tick, Hyalomma marginatum rufipes.</title>
        <authorList>
            <person name="Francischetti I.M."/>
            <person name="Anderson J.M."/>
            <person name="Manoukis N."/>
            <person name="Pham V.M."/>
            <person name="Ribeiro J.M."/>
        </authorList>
    </citation>
    <scope>NUCLEOTIDE SEQUENCE [MRNA]</scope>
    <source>
        <tissue>Salivary gland</tissue>
    </source>
</reference>
<reference evidence="8" key="2">
    <citation type="journal article" date="2016" name="Nat. Struct. Mol. Biol.">
        <title>Structural basis for therapeutic inhibition of complement C5.</title>
        <authorList>
            <person name="Jore M.M."/>
            <person name="Johnson S."/>
            <person name="Sheppard D."/>
            <person name="Barber N.M."/>
            <person name="Li Y.I."/>
            <person name="Nunn M.A."/>
            <person name="Elmlund H."/>
            <person name="Lea S.M."/>
        </authorList>
    </citation>
    <scope>NUCLEOTIDE SEQUENCE [MRNA]</scope>
    <scope>FUNCTION</scope>
    <source>
        <tissue>Salivary gland</tissue>
    </source>
</reference>
<dbReference type="EMBL" id="HP429127">
    <property type="protein sequence ID" value="ADN23522.1"/>
    <property type="molecule type" value="mRNA"/>
</dbReference>
<dbReference type="EMBL" id="BK009407">
    <property type="protein sequence ID" value="DAA64996.1"/>
    <property type="molecule type" value="mRNA"/>
</dbReference>
<dbReference type="EMBL" id="GR908966">
    <property type="status" value="NOT_ANNOTATED_CDS"/>
    <property type="molecule type" value="mRNA"/>
</dbReference>
<dbReference type="SMR" id="E2J6T4"/>
<dbReference type="GO" id="GO:0005576">
    <property type="term" value="C:extracellular region"/>
    <property type="evidence" value="ECO:0007669"/>
    <property type="project" value="UniProtKB-SubCell"/>
</dbReference>
<dbReference type="GO" id="GO:0090729">
    <property type="term" value="F:toxin activity"/>
    <property type="evidence" value="ECO:0007669"/>
    <property type="project" value="UniProtKB-KW"/>
</dbReference>
<dbReference type="CDD" id="cd22951">
    <property type="entry name" value="C5_RaCI-like"/>
    <property type="match status" value="1"/>
</dbReference>
<proteinExistence type="inferred from homology"/>